<evidence type="ECO:0000269" key="1">
    <source>
    </source>
</evidence>
<evidence type="ECO:0000305" key="2"/>
<proteinExistence type="evidence at protein level"/>
<name>NDPA_ECOLI</name>
<feature type="initiator methionine" description="Removed" evidence="1">
    <location>
        <position position="1"/>
    </location>
</feature>
<feature type="chain" id="PRO_0000210904" description="Nucleoid-associated protein YejK">
    <location>
        <begin position="2"/>
        <end position="335"/>
    </location>
</feature>
<reference key="1">
    <citation type="submission" date="1993-10" db="EMBL/GenBank/DDBJ databases">
        <title>Automated multiplex sequencing of the E.coli genome.</title>
        <authorList>
            <person name="Richterich P."/>
            <person name="Lakey N."/>
            <person name="Gryan G."/>
            <person name="Jaehn L."/>
            <person name="Mintz L."/>
            <person name="Robison K."/>
            <person name="Church G.M."/>
        </authorList>
    </citation>
    <scope>NUCLEOTIDE SEQUENCE [LARGE SCALE GENOMIC DNA]</scope>
    <source>
        <strain>K12 / BHB2600</strain>
    </source>
</reference>
<reference key="2">
    <citation type="journal article" date="1997" name="Science">
        <title>The complete genome sequence of Escherichia coli K-12.</title>
        <authorList>
            <person name="Blattner F.R."/>
            <person name="Plunkett G. III"/>
            <person name="Bloch C.A."/>
            <person name="Perna N.T."/>
            <person name="Burland V."/>
            <person name="Riley M."/>
            <person name="Collado-Vides J."/>
            <person name="Glasner J.D."/>
            <person name="Rode C.K."/>
            <person name="Mayhew G.F."/>
            <person name="Gregor J."/>
            <person name="Davis N.W."/>
            <person name="Kirkpatrick H.A."/>
            <person name="Goeden M.A."/>
            <person name="Rose D.J."/>
            <person name="Mau B."/>
            <person name="Shao Y."/>
        </authorList>
    </citation>
    <scope>NUCLEOTIDE SEQUENCE [LARGE SCALE GENOMIC DNA]</scope>
    <source>
        <strain>K12 / MG1655 / ATCC 47076</strain>
    </source>
</reference>
<reference key="3">
    <citation type="journal article" date="2006" name="Mol. Syst. Biol.">
        <title>Highly accurate genome sequences of Escherichia coli K-12 strains MG1655 and W3110.</title>
        <authorList>
            <person name="Hayashi K."/>
            <person name="Morooka N."/>
            <person name="Yamamoto Y."/>
            <person name="Fujita K."/>
            <person name="Isono K."/>
            <person name="Choi S."/>
            <person name="Ohtsubo E."/>
            <person name="Baba T."/>
            <person name="Wanner B.L."/>
            <person name="Mori H."/>
            <person name="Horiuchi T."/>
        </authorList>
    </citation>
    <scope>NUCLEOTIDE SEQUENCE [LARGE SCALE GENOMIC DNA]</scope>
    <source>
        <strain>K12 / W3110 / ATCC 27325 / DSM 5911</strain>
    </source>
</reference>
<reference key="4">
    <citation type="journal article" date="1999" name="J. Bacteriol.">
        <title>Identification of two new proteins in spermidine nucleoids isolated from Escherichia coli.</title>
        <authorList>
            <person name="Murphy L.D."/>
            <person name="Rosner J.L."/>
            <person name="Zimmerman S.B."/>
            <person name="Esposito D."/>
        </authorList>
    </citation>
    <scope>PROTEIN SEQUENCE OF 2-16</scope>
</reference>
<comment type="subcellular location">
    <subcellularLocation>
        <location>Cytoplasm</location>
        <location>Nucleoid</location>
    </subcellularLocation>
</comment>
<comment type="similarity">
    <text evidence="2">Belongs to the YejK family.</text>
</comment>
<gene>
    <name type="primary">yejK</name>
    <name type="ordered locus">b2186</name>
    <name type="ordered locus">JW2174</name>
</gene>
<accession>P33920</accession>
<accession>Q2MAQ5</accession>
<sequence length="335" mass="37823">MSLDINQIALHQLIKRDEQNLELVLRDSLLEPTETVVEMVAELHRVYSAKNKAYGLFSEESELAQTLRLQRQGEEDFLAFSRAATGRLRDELAKYPFADGGFVLFCHYRYLAVEYLLVAVLSNLSSMRVNENLDINPTHYLDINHADIVARIDLTEWETNPESTRYLTFLKGRVGRKVADFFMDFLGASEGLNAKAQNRGLLQAVDDFTAEAQLDKAERQNVRQQVYSYCNEQLQAGEEIELKSLSKELAGVSEVSFTEFAAEKGYELEESFPADRSTLRQLTKFAGSGGGLTINFDAMLLGERIFWDPATDTLTIKGTPPNLRDQLQRRTSGGN</sequence>
<keyword id="KW-0002">3D-structure</keyword>
<keyword id="KW-0963">Cytoplasm</keyword>
<keyword id="KW-0903">Direct protein sequencing</keyword>
<keyword id="KW-1185">Reference proteome</keyword>
<organism>
    <name type="scientific">Escherichia coli (strain K12)</name>
    <dbReference type="NCBI Taxonomy" id="83333"/>
    <lineage>
        <taxon>Bacteria</taxon>
        <taxon>Pseudomonadati</taxon>
        <taxon>Pseudomonadota</taxon>
        <taxon>Gammaproteobacteria</taxon>
        <taxon>Enterobacterales</taxon>
        <taxon>Enterobacteriaceae</taxon>
        <taxon>Escherichia</taxon>
    </lineage>
</organism>
<protein>
    <recommendedName>
        <fullName>Nucleoid-associated protein YejK</fullName>
    </recommendedName>
</protein>
<dbReference type="EMBL" id="U00008">
    <property type="protein sequence ID" value="AAA16382.1"/>
    <property type="molecule type" value="Genomic_DNA"/>
</dbReference>
<dbReference type="EMBL" id="U00096">
    <property type="protein sequence ID" value="AAC75247.1"/>
    <property type="molecule type" value="Genomic_DNA"/>
</dbReference>
<dbReference type="EMBL" id="AP009048">
    <property type="protein sequence ID" value="BAE76651.1"/>
    <property type="molecule type" value="Genomic_DNA"/>
</dbReference>
<dbReference type="PIR" id="A64988">
    <property type="entry name" value="A64988"/>
</dbReference>
<dbReference type="RefSeq" id="NP_416691.1">
    <property type="nucleotide sequence ID" value="NC_000913.3"/>
</dbReference>
<dbReference type="RefSeq" id="WP_000050793.1">
    <property type="nucleotide sequence ID" value="NZ_SSZK01000027.1"/>
</dbReference>
<dbReference type="PDB" id="9BE2">
    <property type="method" value="X-ray"/>
    <property type="resolution" value="3.56 A"/>
    <property type="chains" value="A=1-335"/>
</dbReference>
<dbReference type="PDBsum" id="9BE2"/>
<dbReference type="SMR" id="P33920"/>
<dbReference type="BioGRID" id="4260476">
    <property type="interactions" value="15"/>
</dbReference>
<dbReference type="DIP" id="DIP-11939N"/>
<dbReference type="FunCoup" id="P33920">
    <property type="interactions" value="68"/>
</dbReference>
<dbReference type="IntAct" id="P33920">
    <property type="interactions" value="5"/>
</dbReference>
<dbReference type="STRING" id="511145.b2186"/>
<dbReference type="jPOST" id="P33920"/>
<dbReference type="PaxDb" id="511145-b2186"/>
<dbReference type="EnsemblBacteria" id="AAC75247">
    <property type="protein sequence ID" value="AAC75247"/>
    <property type="gene ID" value="b2186"/>
</dbReference>
<dbReference type="GeneID" id="946690"/>
<dbReference type="KEGG" id="ecj:JW2174"/>
<dbReference type="KEGG" id="eco:b2186"/>
<dbReference type="KEGG" id="ecoc:C3026_12225"/>
<dbReference type="PATRIC" id="fig|1411691.4.peg.50"/>
<dbReference type="EchoBASE" id="EB1980"/>
<dbReference type="eggNOG" id="COG3081">
    <property type="taxonomic scope" value="Bacteria"/>
</dbReference>
<dbReference type="HOGENOM" id="CLU_063050_0_1_6"/>
<dbReference type="InParanoid" id="P33920"/>
<dbReference type="OMA" id="FFMDFLA"/>
<dbReference type="OrthoDB" id="9131762at2"/>
<dbReference type="PhylomeDB" id="P33920"/>
<dbReference type="BioCyc" id="EcoCyc:EG12048-MONOMER"/>
<dbReference type="PRO" id="PR:P33920"/>
<dbReference type="Proteomes" id="UP000000625">
    <property type="component" value="Chromosome"/>
</dbReference>
<dbReference type="GO" id="GO:0043590">
    <property type="term" value="C:bacterial nucleoid"/>
    <property type="evidence" value="ECO:0000314"/>
    <property type="project" value="EcoCyc"/>
</dbReference>
<dbReference type="GO" id="GO:0005737">
    <property type="term" value="C:cytoplasm"/>
    <property type="evidence" value="ECO:0007669"/>
    <property type="project" value="UniProtKB-UniRule"/>
</dbReference>
<dbReference type="GO" id="GO:0003690">
    <property type="term" value="F:double-stranded DNA binding"/>
    <property type="evidence" value="ECO:0000314"/>
    <property type="project" value="EcoCyc"/>
</dbReference>
<dbReference type="GO" id="GO:0042802">
    <property type="term" value="F:identical protein binding"/>
    <property type="evidence" value="ECO:0000314"/>
    <property type="project" value="EcoCyc"/>
</dbReference>
<dbReference type="GO" id="GO:0003727">
    <property type="term" value="F:single-stranded RNA binding"/>
    <property type="evidence" value="ECO:0000314"/>
    <property type="project" value="EcoCyc"/>
</dbReference>
<dbReference type="HAMAP" id="MF_00730">
    <property type="entry name" value="NdpA"/>
    <property type="match status" value="1"/>
</dbReference>
<dbReference type="InterPro" id="IPR007358">
    <property type="entry name" value="Nucleoid_associated_NdpA"/>
</dbReference>
<dbReference type="NCBIfam" id="NF001557">
    <property type="entry name" value="PRK00378.1"/>
    <property type="match status" value="1"/>
</dbReference>
<dbReference type="PANTHER" id="PTHR38772">
    <property type="match status" value="1"/>
</dbReference>
<dbReference type="PANTHER" id="PTHR38772:SF1">
    <property type="entry name" value="NUCLEOID-ASSOCIATED PROTEIN YEJK"/>
    <property type="match status" value="1"/>
</dbReference>
<dbReference type="Pfam" id="PF04245">
    <property type="entry name" value="NA37"/>
    <property type="match status" value="1"/>
</dbReference>